<organism>
    <name type="scientific">Gallus gallus</name>
    <name type="common">Chicken</name>
    <dbReference type="NCBI Taxonomy" id="9031"/>
    <lineage>
        <taxon>Eukaryota</taxon>
        <taxon>Metazoa</taxon>
        <taxon>Chordata</taxon>
        <taxon>Craniata</taxon>
        <taxon>Vertebrata</taxon>
        <taxon>Euteleostomi</taxon>
        <taxon>Archelosauria</taxon>
        <taxon>Archosauria</taxon>
        <taxon>Dinosauria</taxon>
        <taxon>Saurischia</taxon>
        <taxon>Theropoda</taxon>
        <taxon>Coelurosauria</taxon>
        <taxon>Aves</taxon>
        <taxon>Neognathae</taxon>
        <taxon>Galloanserae</taxon>
        <taxon>Galliformes</taxon>
        <taxon>Phasianidae</taxon>
        <taxon>Phasianinae</taxon>
        <taxon>Gallus</taxon>
    </lineage>
</organism>
<feature type="signal peptide" evidence="3">
    <location>
        <begin position="1"/>
        <end position="28"/>
    </location>
</feature>
<feature type="chain" id="PRO_0000332240" description="Nuclear envelope integral membrane protein 2">
    <location>
        <begin position="29"/>
        <end position="447"/>
    </location>
</feature>
<feature type="transmembrane region" description="Helical" evidence="3">
    <location>
        <begin position="144"/>
        <end position="164"/>
    </location>
</feature>
<feature type="transmembrane region" description="Helical" evidence="3">
    <location>
        <begin position="173"/>
        <end position="193"/>
    </location>
</feature>
<feature type="transmembrane region" description="Helical" evidence="3">
    <location>
        <begin position="202"/>
        <end position="222"/>
    </location>
</feature>
<feature type="transmembrane region" description="Helical" evidence="3">
    <location>
        <begin position="235"/>
        <end position="255"/>
    </location>
</feature>
<feature type="transmembrane region" description="Helical" evidence="3">
    <location>
        <begin position="275"/>
        <end position="295"/>
    </location>
</feature>
<feature type="region of interest" description="Disordered" evidence="4">
    <location>
        <begin position="410"/>
        <end position="438"/>
    </location>
</feature>
<evidence type="ECO:0000250" key="1">
    <source>
        <dbReference type="UniProtKB" id="B9X187"/>
    </source>
</evidence>
<evidence type="ECO:0000250" key="2">
    <source>
        <dbReference type="UniProtKB" id="Q6ZQE4"/>
    </source>
</evidence>
<evidence type="ECO:0000255" key="3"/>
<evidence type="ECO:0000256" key="4">
    <source>
        <dbReference type="SAM" id="MobiDB-lite"/>
    </source>
</evidence>
<evidence type="ECO:0000305" key="5"/>
<dbReference type="EMBL" id="AJ720295">
    <property type="protein sequence ID" value="CAG31954.1"/>
    <property type="molecule type" value="mRNA"/>
</dbReference>
<dbReference type="RefSeq" id="NP_001026413.1">
    <property type="nucleotide sequence ID" value="NM_001031242.1"/>
</dbReference>
<dbReference type="FunCoup" id="Q5ZJY9">
    <property type="interactions" value="778"/>
</dbReference>
<dbReference type="STRING" id="9031.ENSGALP00000065142"/>
<dbReference type="PaxDb" id="9031-ENSGALP00000003553"/>
<dbReference type="GeneID" id="423977"/>
<dbReference type="KEGG" id="gga:423977"/>
<dbReference type="CTD" id="100131211"/>
<dbReference type="VEuPathDB" id="HostDB:geneid_423977"/>
<dbReference type="eggNOG" id="KOG3817">
    <property type="taxonomic scope" value="Eukaryota"/>
</dbReference>
<dbReference type="InParanoid" id="Q5ZJY9"/>
<dbReference type="OrthoDB" id="509138at2759"/>
<dbReference type="PhylomeDB" id="Q5ZJY9"/>
<dbReference type="PRO" id="PR:Q5ZJY9"/>
<dbReference type="Proteomes" id="UP000000539">
    <property type="component" value="Unassembled WGS sequence"/>
</dbReference>
<dbReference type="GO" id="GO:0005635">
    <property type="term" value="C:nuclear envelope"/>
    <property type="evidence" value="ECO:0000318"/>
    <property type="project" value="GO_Central"/>
</dbReference>
<dbReference type="GO" id="GO:0005637">
    <property type="term" value="C:nuclear inner membrane"/>
    <property type="evidence" value="ECO:0007669"/>
    <property type="project" value="UniProtKB-SubCell"/>
</dbReference>
<dbReference type="InterPro" id="IPR019358">
    <property type="entry name" value="NEMP_fam"/>
</dbReference>
<dbReference type="PANTHER" id="PTHR13598">
    <property type="entry name" value="AT07567P-RELATED"/>
    <property type="match status" value="1"/>
</dbReference>
<dbReference type="PANTHER" id="PTHR13598:SF3">
    <property type="entry name" value="NUCLEAR ENVELOPE INTEGRAL MEMBRANE PROTEIN 2"/>
    <property type="match status" value="1"/>
</dbReference>
<dbReference type="Pfam" id="PF10225">
    <property type="entry name" value="NEMP"/>
    <property type="match status" value="1"/>
</dbReference>
<protein>
    <recommendedName>
        <fullName>Nuclear envelope integral membrane protein 2</fullName>
    </recommendedName>
</protein>
<sequence>MGPRRLPWARPGPALGLLLLALAGAVPAAGGSCSLLEEGNTIQKLHEDCFCYVQNRTMHLQYIWSTVQVKINSTRTFRFVPTPEKSNCRNSETVFEFAACAVQILWRPETSTETFLKIKQYGEDFCFRIQPFKEELYTVSMTREMLDGKLLFLFAAGIFLFHFANSLSRSTNFFYLSGIILGVLALLVFVLLALKRFIPRRSTFWILLSGCWMSSLYLIYCFKENMQWLWSEHRIYVLGYFVAVGTLSFATCYQHGPLTSELSITLFTWTLQLTAFVFIYCGVNIPQVAYAIIAVKPSPKGLGYPPAAAWHIGRKMKNHFQSKKVVVRCLTEEEYREQGETETVRALEELRSFCKNPDFSSWLAVSKLQSPHRFAGFVLGSPHVSPAETKAHDEEYGIGSSFLEEQLFETRTESEQDETTSYIHEGDDENEDEIHEPISFPYATELL</sequence>
<reference key="1">
    <citation type="journal article" date="2005" name="Genome Biol.">
        <title>Full-length cDNAs from chicken bursal lymphocytes to facilitate gene function analysis.</title>
        <authorList>
            <person name="Caldwell R.B."/>
            <person name="Kierzek A.M."/>
            <person name="Arakawa H."/>
            <person name="Bezzubov Y."/>
            <person name="Zaim J."/>
            <person name="Fiedler P."/>
            <person name="Kutter S."/>
            <person name="Blagodatski A."/>
            <person name="Kostovska D."/>
            <person name="Koter M."/>
            <person name="Plachy J."/>
            <person name="Carninci P."/>
            <person name="Hayashizaki Y."/>
            <person name="Buerstedde J.-M."/>
        </authorList>
    </citation>
    <scope>NUCLEOTIDE SEQUENCE [LARGE SCALE MRNA]</scope>
    <source>
        <strain>CB</strain>
        <tissue>Bursa of Fabricius</tissue>
    </source>
</reference>
<proteinExistence type="evidence at transcript level"/>
<keyword id="KW-0472">Membrane</keyword>
<keyword id="KW-0539">Nucleus</keyword>
<keyword id="KW-1185">Reference proteome</keyword>
<keyword id="KW-0732">Signal</keyword>
<keyword id="KW-0812">Transmembrane</keyword>
<keyword id="KW-1133">Transmembrane helix</keyword>
<gene>
    <name type="primary">NEMP2</name>
    <name type="synonym">TMEM194B</name>
    <name type="ORF">RCJMB04_14f14</name>
</gene>
<comment type="subcellular location">
    <subcellularLocation>
        <location evidence="2">Nucleus inner membrane</location>
        <topology evidence="3">Multi-pass membrane protein</topology>
        <orientation evidence="1">Nucleoplasmic side</orientation>
    </subcellularLocation>
</comment>
<comment type="similarity">
    <text evidence="5">Belongs to the NEMP family.</text>
</comment>
<name>NEMP2_CHICK</name>
<accession>Q5ZJY9</accession>